<keyword id="KW-0028">Amino-acid biosynthesis</keyword>
<keyword id="KW-0963">Cytoplasm</keyword>
<keyword id="KW-0220">Diaminopimelate biosynthesis</keyword>
<keyword id="KW-0457">Lysine biosynthesis</keyword>
<keyword id="KW-0520">NAD</keyword>
<keyword id="KW-0521">NADP</keyword>
<keyword id="KW-0560">Oxidoreductase</keyword>
<evidence type="ECO:0000255" key="1">
    <source>
        <dbReference type="HAMAP-Rule" id="MF_00102"/>
    </source>
</evidence>
<evidence type="ECO:0000305" key="2"/>
<gene>
    <name evidence="1" type="primary">dapB</name>
    <name type="ordered locus">BcerKBAB4_1458</name>
</gene>
<comment type="function">
    <text evidence="1">Catalyzes the conversion of 4-hydroxy-tetrahydrodipicolinate (HTPA) to tetrahydrodipicolinate.</text>
</comment>
<comment type="catalytic activity">
    <reaction evidence="1">
        <text>(S)-2,3,4,5-tetrahydrodipicolinate + NAD(+) + H2O = (2S,4S)-4-hydroxy-2,3,4,5-tetrahydrodipicolinate + NADH + H(+)</text>
        <dbReference type="Rhea" id="RHEA:35323"/>
        <dbReference type="ChEBI" id="CHEBI:15377"/>
        <dbReference type="ChEBI" id="CHEBI:15378"/>
        <dbReference type="ChEBI" id="CHEBI:16845"/>
        <dbReference type="ChEBI" id="CHEBI:57540"/>
        <dbReference type="ChEBI" id="CHEBI:57945"/>
        <dbReference type="ChEBI" id="CHEBI:67139"/>
        <dbReference type="EC" id="1.17.1.8"/>
    </reaction>
</comment>
<comment type="catalytic activity">
    <reaction evidence="1">
        <text>(S)-2,3,4,5-tetrahydrodipicolinate + NADP(+) + H2O = (2S,4S)-4-hydroxy-2,3,4,5-tetrahydrodipicolinate + NADPH + H(+)</text>
        <dbReference type="Rhea" id="RHEA:35331"/>
        <dbReference type="ChEBI" id="CHEBI:15377"/>
        <dbReference type="ChEBI" id="CHEBI:15378"/>
        <dbReference type="ChEBI" id="CHEBI:16845"/>
        <dbReference type="ChEBI" id="CHEBI:57783"/>
        <dbReference type="ChEBI" id="CHEBI:58349"/>
        <dbReference type="ChEBI" id="CHEBI:67139"/>
        <dbReference type="EC" id="1.17.1.8"/>
    </reaction>
</comment>
<comment type="pathway">
    <text evidence="1">Amino-acid biosynthesis; L-lysine biosynthesis via DAP pathway; (S)-tetrahydrodipicolinate from L-aspartate: step 4/4.</text>
</comment>
<comment type="subcellular location">
    <subcellularLocation>
        <location evidence="1">Cytoplasm</location>
    </subcellularLocation>
</comment>
<comment type="similarity">
    <text evidence="1">Belongs to the DapB family.</text>
</comment>
<comment type="caution">
    <text evidence="2">Was originally thought to be a dihydrodipicolinate reductase (DHDPR), catalyzing the conversion of dihydrodipicolinate to tetrahydrodipicolinate. However, it was shown in E.coli that the substrate of the enzymatic reaction is not dihydrodipicolinate (DHDP) but in fact (2S,4S)-4-hydroxy-2,3,4,5-tetrahydrodipicolinic acid (HTPA), the product released by the DapA-catalyzed reaction.</text>
</comment>
<protein>
    <recommendedName>
        <fullName evidence="1">4-hydroxy-tetrahydrodipicolinate reductase</fullName>
        <shortName evidence="1">HTPA reductase</shortName>
        <ecNumber evidence="1">1.17.1.8</ecNumber>
    </recommendedName>
</protein>
<organism>
    <name type="scientific">Bacillus mycoides (strain KBAB4)</name>
    <name type="common">Bacillus weihenstephanensis</name>
    <dbReference type="NCBI Taxonomy" id="315730"/>
    <lineage>
        <taxon>Bacteria</taxon>
        <taxon>Bacillati</taxon>
        <taxon>Bacillota</taxon>
        <taxon>Bacilli</taxon>
        <taxon>Bacillales</taxon>
        <taxon>Bacillaceae</taxon>
        <taxon>Bacillus</taxon>
        <taxon>Bacillus cereus group</taxon>
    </lineage>
</organism>
<accession>A9VME3</accession>
<feature type="chain" id="PRO_1000093944" description="4-hydroxy-tetrahydrodipicolinate reductase">
    <location>
        <begin position="1"/>
        <end position="266"/>
    </location>
</feature>
<feature type="active site" description="Proton donor/acceptor" evidence="1">
    <location>
        <position position="155"/>
    </location>
</feature>
<feature type="active site" description="Proton donor" evidence="1">
    <location>
        <position position="159"/>
    </location>
</feature>
<feature type="binding site" evidence="1">
    <location>
        <begin position="10"/>
        <end position="15"/>
    </location>
    <ligand>
        <name>NAD(+)</name>
        <dbReference type="ChEBI" id="CHEBI:57540"/>
    </ligand>
</feature>
<feature type="binding site" evidence="1">
    <location>
        <position position="38"/>
    </location>
    <ligand>
        <name>NADP(+)</name>
        <dbReference type="ChEBI" id="CHEBI:58349"/>
    </ligand>
</feature>
<feature type="binding site" evidence="1">
    <location>
        <begin position="99"/>
        <end position="101"/>
    </location>
    <ligand>
        <name>NAD(+)</name>
        <dbReference type="ChEBI" id="CHEBI:57540"/>
    </ligand>
</feature>
<feature type="binding site" evidence="1">
    <location>
        <begin position="125"/>
        <end position="128"/>
    </location>
    <ligand>
        <name>NAD(+)</name>
        <dbReference type="ChEBI" id="CHEBI:57540"/>
    </ligand>
</feature>
<feature type="binding site" evidence="1">
    <location>
        <position position="156"/>
    </location>
    <ligand>
        <name>(S)-2,3,4,5-tetrahydrodipicolinate</name>
        <dbReference type="ChEBI" id="CHEBI:16845"/>
    </ligand>
</feature>
<feature type="binding site" evidence="1">
    <location>
        <begin position="165"/>
        <end position="166"/>
    </location>
    <ligand>
        <name>(S)-2,3,4,5-tetrahydrodipicolinate</name>
        <dbReference type="ChEBI" id="CHEBI:16845"/>
    </ligand>
</feature>
<reference key="1">
    <citation type="journal article" date="2008" name="Chem. Biol. Interact.">
        <title>Extending the Bacillus cereus group genomics to putative food-borne pathogens of different toxicity.</title>
        <authorList>
            <person name="Lapidus A."/>
            <person name="Goltsman E."/>
            <person name="Auger S."/>
            <person name="Galleron N."/>
            <person name="Segurens B."/>
            <person name="Dossat C."/>
            <person name="Land M.L."/>
            <person name="Broussolle V."/>
            <person name="Brillard J."/>
            <person name="Guinebretiere M.-H."/>
            <person name="Sanchis V."/>
            <person name="Nguen-the C."/>
            <person name="Lereclus D."/>
            <person name="Richardson P."/>
            <person name="Wincker P."/>
            <person name="Weissenbach J."/>
            <person name="Ehrlich S.D."/>
            <person name="Sorokin A."/>
        </authorList>
    </citation>
    <scope>NUCLEOTIDE SEQUENCE [LARGE SCALE GENOMIC DNA]</scope>
    <source>
        <strain>KBAB4</strain>
    </source>
</reference>
<proteinExistence type="inferred from homology"/>
<sequence length="266" mass="29270">MKEIKVIIAGPRGRMGYEAVLLMERTAHFNLVAAIDYKHGGEKISDLPGMPALDAPIYADLHTCLDEVEADVLLDLTTPEIGKKHVTLAVERGLRSVIGTTGFTEEELKQLTENAKEKEVGTIIAPNFAIGAVLMMKFSQMAAKYFQDVEVIELHHDQKLDAPSGTAVKTVELIRQNRVPKEQGHPNETEQLEGARGANVDGIHIHSVRLPGLIAHQEVMFGGDGQMLTVRHDSFNRASFMSGVKLSIETVMNLDHLVYGLENIID</sequence>
<dbReference type="EC" id="1.17.1.8" evidence="1"/>
<dbReference type="EMBL" id="CP000903">
    <property type="protein sequence ID" value="ABY42705.1"/>
    <property type="molecule type" value="Genomic_DNA"/>
</dbReference>
<dbReference type="RefSeq" id="WP_002126457.1">
    <property type="nucleotide sequence ID" value="NC_010184.1"/>
</dbReference>
<dbReference type="SMR" id="A9VME3"/>
<dbReference type="KEGG" id="bwe:BcerKBAB4_1458"/>
<dbReference type="eggNOG" id="COG0289">
    <property type="taxonomic scope" value="Bacteria"/>
</dbReference>
<dbReference type="HOGENOM" id="CLU_047479_0_1_9"/>
<dbReference type="UniPathway" id="UPA00034">
    <property type="reaction ID" value="UER00018"/>
</dbReference>
<dbReference type="Proteomes" id="UP000002154">
    <property type="component" value="Chromosome"/>
</dbReference>
<dbReference type="GO" id="GO:0005829">
    <property type="term" value="C:cytosol"/>
    <property type="evidence" value="ECO:0007669"/>
    <property type="project" value="TreeGrafter"/>
</dbReference>
<dbReference type="GO" id="GO:0008839">
    <property type="term" value="F:4-hydroxy-tetrahydrodipicolinate reductase"/>
    <property type="evidence" value="ECO:0007669"/>
    <property type="project" value="UniProtKB-EC"/>
</dbReference>
<dbReference type="GO" id="GO:0051287">
    <property type="term" value="F:NAD binding"/>
    <property type="evidence" value="ECO:0007669"/>
    <property type="project" value="UniProtKB-UniRule"/>
</dbReference>
<dbReference type="GO" id="GO:0050661">
    <property type="term" value="F:NADP binding"/>
    <property type="evidence" value="ECO:0007669"/>
    <property type="project" value="UniProtKB-UniRule"/>
</dbReference>
<dbReference type="GO" id="GO:0016726">
    <property type="term" value="F:oxidoreductase activity, acting on CH or CH2 groups, NAD or NADP as acceptor"/>
    <property type="evidence" value="ECO:0007669"/>
    <property type="project" value="UniProtKB-UniRule"/>
</dbReference>
<dbReference type="GO" id="GO:0019877">
    <property type="term" value="P:diaminopimelate biosynthetic process"/>
    <property type="evidence" value="ECO:0007669"/>
    <property type="project" value="UniProtKB-UniRule"/>
</dbReference>
<dbReference type="GO" id="GO:0009089">
    <property type="term" value="P:lysine biosynthetic process via diaminopimelate"/>
    <property type="evidence" value="ECO:0007669"/>
    <property type="project" value="UniProtKB-UniRule"/>
</dbReference>
<dbReference type="CDD" id="cd02274">
    <property type="entry name" value="DHDPR_N"/>
    <property type="match status" value="1"/>
</dbReference>
<dbReference type="FunFam" id="3.30.360.10:FF:000009">
    <property type="entry name" value="4-hydroxy-tetrahydrodipicolinate reductase"/>
    <property type="match status" value="1"/>
</dbReference>
<dbReference type="FunFam" id="3.40.50.720:FF:000180">
    <property type="entry name" value="4-hydroxy-tetrahydrodipicolinate reductase"/>
    <property type="match status" value="1"/>
</dbReference>
<dbReference type="Gene3D" id="3.30.360.10">
    <property type="entry name" value="Dihydrodipicolinate Reductase, domain 2"/>
    <property type="match status" value="1"/>
</dbReference>
<dbReference type="Gene3D" id="3.40.50.720">
    <property type="entry name" value="NAD(P)-binding Rossmann-like Domain"/>
    <property type="match status" value="1"/>
</dbReference>
<dbReference type="HAMAP" id="MF_00102">
    <property type="entry name" value="DapB"/>
    <property type="match status" value="1"/>
</dbReference>
<dbReference type="InterPro" id="IPR022663">
    <property type="entry name" value="DapB_C"/>
</dbReference>
<dbReference type="InterPro" id="IPR000846">
    <property type="entry name" value="DapB_N"/>
</dbReference>
<dbReference type="InterPro" id="IPR022664">
    <property type="entry name" value="DapB_N_CS"/>
</dbReference>
<dbReference type="InterPro" id="IPR023940">
    <property type="entry name" value="DHDPR_bac"/>
</dbReference>
<dbReference type="InterPro" id="IPR036291">
    <property type="entry name" value="NAD(P)-bd_dom_sf"/>
</dbReference>
<dbReference type="NCBIfam" id="TIGR00036">
    <property type="entry name" value="dapB"/>
    <property type="match status" value="1"/>
</dbReference>
<dbReference type="PANTHER" id="PTHR20836:SF0">
    <property type="entry name" value="4-HYDROXY-TETRAHYDRODIPICOLINATE REDUCTASE 1, CHLOROPLASTIC-RELATED"/>
    <property type="match status" value="1"/>
</dbReference>
<dbReference type="PANTHER" id="PTHR20836">
    <property type="entry name" value="DIHYDRODIPICOLINATE REDUCTASE"/>
    <property type="match status" value="1"/>
</dbReference>
<dbReference type="Pfam" id="PF05173">
    <property type="entry name" value="DapB_C"/>
    <property type="match status" value="1"/>
</dbReference>
<dbReference type="Pfam" id="PF01113">
    <property type="entry name" value="DapB_N"/>
    <property type="match status" value="1"/>
</dbReference>
<dbReference type="PIRSF" id="PIRSF000161">
    <property type="entry name" value="DHPR"/>
    <property type="match status" value="1"/>
</dbReference>
<dbReference type="SUPFAM" id="SSF55347">
    <property type="entry name" value="Glyceraldehyde-3-phosphate dehydrogenase-like, C-terminal domain"/>
    <property type="match status" value="1"/>
</dbReference>
<dbReference type="SUPFAM" id="SSF51735">
    <property type="entry name" value="NAD(P)-binding Rossmann-fold domains"/>
    <property type="match status" value="1"/>
</dbReference>
<dbReference type="PROSITE" id="PS01298">
    <property type="entry name" value="DAPB"/>
    <property type="match status" value="1"/>
</dbReference>
<name>DAPB_BACMK</name>